<proteinExistence type="inferred from homology"/>
<feature type="chain" id="PRO_1000066577" description="Acyl carrier protein">
    <location>
        <begin position="1"/>
        <end position="79"/>
    </location>
</feature>
<feature type="domain" description="Carrier" evidence="2">
    <location>
        <begin position="2"/>
        <end position="77"/>
    </location>
</feature>
<feature type="modified residue" description="O-(pantetheine 4'-phosphoryl)serine" evidence="2">
    <location>
        <position position="37"/>
    </location>
</feature>
<organism>
    <name type="scientific">Burkholderia lata (strain ATCC 17760 / DSM 23089 / LMG 22485 / NCIMB 9086 / R18194 / 383)</name>
    <dbReference type="NCBI Taxonomy" id="482957"/>
    <lineage>
        <taxon>Bacteria</taxon>
        <taxon>Pseudomonadati</taxon>
        <taxon>Pseudomonadota</taxon>
        <taxon>Betaproteobacteria</taxon>
        <taxon>Burkholderiales</taxon>
        <taxon>Burkholderiaceae</taxon>
        <taxon>Burkholderia</taxon>
        <taxon>Burkholderia cepacia complex</taxon>
    </lineage>
</organism>
<protein>
    <recommendedName>
        <fullName evidence="1">Acyl carrier protein</fullName>
        <shortName evidence="1">ACP</shortName>
    </recommendedName>
</protein>
<keyword id="KW-0963">Cytoplasm</keyword>
<keyword id="KW-0275">Fatty acid biosynthesis</keyword>
<keyword id="KW-0276">Fatty acid metabolism</keyword>
<keyword id="KW-0444">Lipid biosynthesis</keyword>
<keyword id="KW-0443">Lipid metabolism</keyword>
<keyword id="KW-0596">Phosphopantetheine</keyword>
<keyword id="KW-0597">Phosphoprotein</keyword>
<name>ACP_BURL3</name>
<sequence>MDNIEQRVKKIVAEQLGVAEAEIKNEASFVNDLGADSLDTVELVMALEDEFGMEIPDEEAEKITTVQQAIDYARANVKA</sequence>
<gene>
    <name evidence="1" type="primary">acpP</name>
    <name type="ordered locus">Bcep18194_A4236</name>
</gene>
<evidence type="ECO:0000255" key="1">
    <source>
        <dbReference type="HAMAP-Rule" id="MF_01217"/>
    </source>
</evidence>
<evidence type="ECO:0000255" key="2">
    <source>
        <dbReference type="PROSITE-ProRule" id="PRU00258"/>
    </source>
</evidence>
<dbReference type="EMBL" id="CP000151">
    <property type="protein sequence ID" value="ABB07833.1"/>
    <property type="molecule type" value="Genomic_DNA"/>
</dbReference>
<dbReference type="RefSeq" id="WP_004197638.1">
    <property type="nucleotide sequence ID" value="NZ_WNDV01000026.1"/>
</dbReference>
<dbReference type="SMR" id="Q39I83"/>
<dbReference type="GeneID" id="98102461"/>
<dbReference type="KEGG" id="bur:Bcep18194_A4236"/>
<dbReference type="HOGENOM" id="CLU_108696_5_1_4"/>
<dbReference type="UniPathway" id="UPA00094"/>
<dbReference type="Proteomes" id="UP000002705">
    <property type="component" value="Chromosome 1"/>
</dbReference>
<dbReference type="GO" id="GO:0005829">
    <property type="term" value="C:cytosol"/>
    <property type="evidence" value="ECO:0007669"/>
    <property type="project" value="TreeGrafter"/>
</dbReference>
<dbReference type="GO" id="GO:0016020">
    <property type="term" value="C:membrane"/>
    <property type="evidence" value="ECO:0007669"/>
    <property type="project" value="GOC"/>
</dbReference>
<dbReference type="GO" id="GO:0000035">
    <property type="term" value="F:acyl binding"/>
    <property type="evidence" value="ECO:0007669"/>
    <property type="project" value="TreeGrafter"/>
</dbReference>
<dbReference type="GO" id="GO:0000036">
    <property type="term" value="F:acyl carrier activity"/>
    <property type="evidence" value="ECO:0007669"/>
    <property type="project" value="UniProtKB-UniRule"/>
</dbReference>
<dbReference type="GO" id="GO:0009245">
    <property type="term" value="P:lipid A biosynthetic process"/>
    <property type="evidence" value="ECO:0007669"/>
    <property type="project" value="TreeGrafter"/>
</dbReference>
<dbReference type="FunFam" id="1.10.1200.10:FF:000001">
    <property type="entry name" value="Acyl carrier protein"/>
    <property type="match status" value="1"/>
</dbReference>
<dbReference type="Gene3D" id="1.10.1200.10">
    <property type="entry name" value="ACP-like"/>
    <property type="match status" value="1"/>
</dbReference>
<dbReference type="HAMAP" id="MF_01217">
    <property type="entry name" value="Acyl_carrier"/>
    <property type="match status" value="1"/>
</dbReference>
<dbReference type="InterPro" id="IPR003231">
    <property type="entry name" value="ACP"/>
</dbReference>
<dbReference type="InterPro" id="IPR036736">
    <property type="entry name" value="ACP-like_sf"/>
</dbReference>
<dbReference type="InterPro" id="IPR009081">
    <property type="entry name" value="PP-bd_ACP"/>
</dbReference>
<dbReference type="InterPro" id="IPR006162">
    <property type="entry name" value="Ppantetheine_attach_site"/>
</dbReference>
<dbReference type="NCBIfam" id="TIGR00517">
    <property type="entry name" value="acyl_carrier"/>
    <property type="match status" value="1"/>
</dbReference>
<dbReference type="NCBIfam" id="NF002148">
    <property type="entry name" value="PRK00982.1-2"/>
    <property type="match status" value="1"/>
</dbReference>
<dbReference type="NCBIfam" id="NF002149">
    <property type="entry name" value="PRK00982.1-3"/>
    <property type="match status" value="1"/>
</dbReference>
<dbReference type="NCBIfam" id="NF002150">
    <property type="entry name" value="PRK00982.1-4"/>
    <property type="match status" value="1"/>
</dbReference>
<dbReference type="NCBIfam" id="NF002151">
    <property type="entry name" value="PRK00982.1-5"/>
    <property type="match status" value="1"/>
</dbReference>
<dbReference type="PANTHER" id="PTHR20863">
    <property type="entry name" value="ACYL CARRIER PROTEIN"/>
    <property type="match status" value="1"/>
</dbReference>
<dbReference type="PANTHER" id="PTHR20863:SF76">
    <property type="entry name" value="CARRIER DOMAIN-CONTAINING PROTEIN"/>
    <property type="match status" value="1"/>
</dbReference>
<dbReference type="Pfam" id="PF00550">
    <property type="entry name" value="PP-binding"/>
    <property type="match status" value="1"/>
</dbReference>
<dbReference type="SUPFAM" id="SSF47336">
    <property type="entry name" value="ACP-like"/>
    <property type="match status" value="1"/>
</dbReference>
<dbReference type="PROSITE" id="PS50075">
    <property type="entry name" value="CARRIER"/>
    <property type="match status" value="1"/>
</dbReference>
<dbReference type="PROSITE" id="PS00012">
    <property type="entry name" value="PHOSPHOPANTETHEINE"/>
    <property type="match status" value="1"/>
</dbReference>
<accession>Q39I83</accession>
<reference key="1">
    <citation type="submission" date="2005-10" db="EMBL/GenBank/DDBJ databases">
        <title>Complete sequence of chromosome 1 of Burkholderia sp. 383.</title>
        <authorList>
            <consortium name="US DOE Joint Genome Institute"/>
            <person name="Copeland A."/>
            <person name="Lucas S."/>
            <person name="Lapidus A."/>
            <person name="Barry K."/>
            <person name="Detter J.C."/>
            <person name="Glavina T."/>
            <person name="Hammon N."/>
            <person name="Israni S."/>
            <person name="Pitluck S."/>
            <person name="Chain P."/>
            <person name="Malfatti S."/>
            <person name="Shin M."/>
            <person name="Vergez L."/>
            <person name="Schmutz J."/>
            <person name="Larimer F."/>
            <person name="Land M."/>
            <person name="Kyrpides N."/>
            <person name="Lykidis A."/>
            <person name="Richardson P."/>
        </authorList>
    </citation>
    <scope>NUCLEOTIDE SEQUENCE [LARGE SCALE GENOMIC DNA]</scope>
    <source>
        <strain>ATCC 17760 / DSM 23089 / LMG 22485 / NCIMB 9086 / R18194 / 383</strain>
    </source>
</reference>
<comment type="function">
    <text evidence="1">Carrier of the growing fatty acid chain in fatty acid biosynthesis.</text>
</comment>
<comment type="pathway">
    <text evidence="1">Lipid metabolism; fatty acid biosynthesis.</text>
</comment>
<comment type="subcellular location">
    <subcellularLocation>
        <location evidence="1">Cytoplasm</location>
    </subcellularLocation>
</comment>
<comment type="PTM">
    <text evidence="1">4'-phosphopantetheine is transferred from CoA to a specific serine of apo-ACP by AcpS. This modification is essential for activity because fatty acids are bound in thioester linkage to the sulfhydryl of the prosthetic group.</text>
</comment>
<comment type="similarity">
    <text evidence="1">Belongs to the acyl carrier protein (ACP) family.</text>
</comment>